<comment type="similarity">
    <text evidence="1">Belongs to the UPF0302 family.</text>
</comment>
<organism>
    <name type="scientific">Shouchella clausii (strain KSM-K16)</name>
    <name type="common">Alkalihalobacillus clausii</name>
    <dbReference type="NCBI Taxonomy" id="66692"/>
    <lineage>
        <taxon>Bacteria</taxon>
        <taxon>Bacillati</taxon>
        <taxon>Bacillota</taxon>
        <taxon>Bacilli</taxon>
        <taxon>Bacillales</taxon>
        <taxon>Bacillaceae</taxon>
        <taxon>Shouchella</taxon>
    </lineage>
</organism>
<dbReference type="EMBL" id="AP006627">
    <property type="protein sequence ID" value="BAD64440.1"/>
    <property type="molecule type" value="Genomic_DNA"/>
</dbReference>
<dbReference type="RefSeq" id="WP_011246748.1">
    <property type="nucleotide sequence ID" value="NC_006582.1"/>
</dbReference>
<dbReference type="SMR" id="Q5WGR5"/>
<dbReference type="STRING" id="66692.ABC1905"/>
<dbReference type="KEGG" id="bcl:ABC1905"/>
<dbReference type="eggNOG" id="COG5582">
    <property type="taxonomic scope" value="Bacteria"/>
</dbReference>
<dbReference type="HOGENOM" id="CLU_126019_0_0_9"/>
<dbReference type="OrthoDB" id="2155814at2"/>
<dbReference type="Proteomes" id="UP000001168">
    <property type="component" value="Chromosome"/>
</dbReference>
<dbReference type="Gene3D" id="3.40.1530.30">
    <property type="entry name" value="Uncharacterised family UPF0302, N-terminal domain"/>
    <property type="match status" value="1"/>
</dbReference>
<dbReference type="Gene3D" id="4.10.810.10">
    <property type="entry name" value="Virus Scaffolding Protein, Chain A"/>
    <property type="match status" value="1"/>
</dbReference>
<dbReference type="HAMAP" id="MF_00760">
    <property type="entry name" value="UPF0302"/>
    <property type="match status" value="1"/>
</dbReference>
<dbReference type="InterPro" id="IPR014957">
    <property type="entry name" value="IDEAL_dom"/>
</dbReference>
<dbReference type="InterPro" id="IPR011188">
    <property type="entry name" value="UPF0302"/>
</dbReference>
<dbReference type="InterPro" id="IPR014963">
    <property type="entry name" value="UPF0302_N"/>
</dbReference>
<dbReference type="InterPro" id="IPR038091">
    <property type="entry name" value="UPF0302_N_sf"/>
</dbReference>
<dbReference type="InterPro" id="IPR027393">
    <property type="entry name" value="Virus_scaffolding_prot_C"/>
</dbReference>
<dbReference type="NCBIfam" id="NF002965">
    <property type="entry name" value="PRK03636.1"/>
    <property type="match status" value="1"/>
</dbReference>
<dbReference type="Pfam" id="PF08858">
    <property type="entry name" value="IDEAL"/>
    <property type="match status" value="1"/>
</dbReference>
<dbReference type="Pfam" id="PF08864">
    <property type="entry name" value="UPF0302"/>
    <property type="match status" value="1"/>
</dbReference>
<dbReference type="PIRSF" id="PIRSF007165">
    <property type="entry name" value="UCP007165"/>
    <property type="match status" value="1"/>
</dbReference>
<dbReference type="SMART" id="SM00914">
    <property type="entry name" value="IDEAL"/>
    <property type="match status" value="1"/>
</dbReference>
<name>Y1905_SHOC1</name>
<reference key="1">
    <citation type="submission" date="2003-10" db="EMBL/GenBank/DDBJ databases">
        <title>The complete genome sequence of the alkaliphilic Bacillus clausii KSM-K16.</title>
        <authorList>
            <person name="Takaki Y."/>
            <person name="Kageyama Y."/>
            <person name="Shimamura S."/>
            <person name="Suzuki H."/>
            <person name="Nishi S."/>
            <person name="Hatada Y."/>
            <person name="Kawai S."/>
            <person name="Ito S."/>
            <person name="Horikoshi K."/>
        </authorList>
    </citation>
    <scope>NUCLEOTIDE SEQUENCE [LARGE SCALE GENOMIC DNA]</scope>
    <source>
        <strain>KSM-K16</strain>
    </source>
</reference>
<proteinExistence type="inferred from homology"/>
<feature type="chain" id="PRO_1000046728" description="UPF0302 protein ABC1905">
    <location>
        <begin position="1"/>
        <end position="181"/>
    </location>
</feature>
<accession>Q5WGR5</accession>
<evidence type="ECO:0000255" key="1">
    <source>
        <dbReference type="HAMAP-Rule" id="MF_00760"/>
    </source>
</evidence>
<keyword id="KW-1185">Reference proteome</keyword>
<protein>
    <recommendedName>
        <fullName evidence="1">UPF0302 protein ABC1905</fullName>
    </recommendedName>
</protein>
<sequence length="181" mass="21410">MSNMVPVMDKKAFLRSFLKRHQLKRRECAWLLNYLMNDDTLMERVHFLNHSEGTPKALVISAQGIEQIPFSFRKKHHVTTDCEKAFHDIRLNQTEDIYIELHFQERLTCPQYLAVLEDNPYLPETQERAQAFERKAEALLQESVRLFQLKKLSEAIDEALDNGDKETFMELSEQLNRLRKS</sequence>
<gene>
    <name type="ordered locus">ABC1905</name>
</gene>